<reference key="1">
    <citation type="journal article" date="2000" name="Nature">
        <title>Sequence and analysis of chromosome 1 of the plant Arabidopsis thaliana.</title>
        <authorList>
            <person name="Theologis A."/>
            <person name="Ecker J.R."/>
            <person name="Palm C.J."/>
            <person name="Federspiel N.A."/>
            <person name="Kaul S."/>
            <person name="White O."/>
            <person name="Alonso J."/>
            <person name="Altafi H."/>
            <person name="Araujo R."/>
            <person name="Bowman C.L."/>
            <person name="Brooks S.Y."/>
            <person name="Buehler E."/>
            <person name="Chan A."/>
            <person name="Chao Q."/>
            <person name="Chen H."/>
            <person name="Cheuk R.F."/>
            <person name="Chin C.W."/>
            <person name="Chung M.K."/>
            <person name="Conn L."/>
            <person name="Conway A.B."/>
            <person name="Conway A.R."/>
            <person name="Creasy T.H."/>
            <person name="Dewar K."/>
            <person name="Dunn P."/>
            <person name="Etgu P."/>
            <person name="Feldblyum T.V."/>
            <person name="Feng J.-D."/>
            <person name="Fong B."/>
            <person name="Fujii C.Y."/>
            <person name="Gill J.E."/>
            <person name="Goldsmith A.D."/>
            <person name="Haas B."/>
            <person name="Hansen N.F."/>
            <person name="Hughes B."/>
            <person name="Huizar L."/>
            <person name="Hunter J.L."/>
            <person name="Jenkins J."/>
            <person name="Johnson-Hopson C."/>
            <person name="Khan S."/>
            <person name="Khaykin E."/>
            <person name="Kim C.J."/>
            <person name="Koo H.L."/>
            <person name="Kremenetskaia I."/>
            <person name="Kurtz D.B."/>
            <person name="Kwan A."/>
            <person name="Lam B."/>
            <person name="Langin-Hooper S."/>
            <person name="Lee A."/>
            <person name="Lee J.M."/>
            <person name="Lenz C.A."/>
            <person name="Li J.H."/>
            <person name="Li Y.-P."/>
            <person name="Lin X."/>
            <person name="Liu S.X."/>
            <person name="Liu Z.A."/>
            <person name="Luros J.S."/>
            <person name="Maiti R."/>
            <person name="Marziali A."/>
            <person name="Militscher J."/>
            <person name="Miranda M."/>
            <person name="Nguyen M."/>
            <person name="Nierman W.C."/>
            <person name="Osborne B.I."/>
            <person name="Pai G."/>
            <person name="Peterson J."/>
            <person name="Pham P.K."/>
            <person name="Rizzo M."/>
            <person name="Rooney T."/>
            <person name="Rowley D."/>
            <person name="Sakano H."/>
            <person name="Salzberg S.L."/>
            <person name="Schwartz J.R."/>
            <person name="Shinn P."/>
            <person name="Southwick A.M."/>
            <person name="Sun H."/>
            <person name="Tallon L.J."/>
            <person name="Tambunga G."/>
            <person name="Toriumi M.J."/>
            <person name="Town C.D."/>
            <person name="Utterback T."/>
            <person name="Van Aken S."/>
            <person name="Vaysberg M."/>
            <person name="Vysotskaia V.S."/>
            <person name="Walker M."/>
            <person name="Wu D."/>
            <person name="Yu G."/>
            <person name="Fraser C.M."/>
            <person name="Venter J.C."/>
            <person name="Davis R.W."/>
        </authorList>
    </citation>
    <scope>NUCLEOTIDE SEQUENCE [LARGE SCALE GENOMIC DNA]</scope>
    <source>
        <strain>cv. Columbia</strain>
    </source>
</reference>
<reference key="2">
    <citation type="journal article" date="2017" name="Plant J.">
        <title>Araport11: a complete reannotation of the Arabidopsis thaliana reference genome.</title>
        <authorList>
            <person name="Cheng C.Y."/>
            <person name="Krishnakumar V."/>
            <person name="Chan A.P."/>
            <person name="Thibaud-Nissen F."/>
            <person name="Schobel S."/>
            <person name="Town C.D."/>
        </authorList>
    </citation>
    <scope>GENOME REANNOTATION</scope>
    <source>
        <strain>cv. Columbia</strain>
    </source>
</reference>
<reference key="3">
    <citation type="journal article" date="2006" name="Plant Physiol.">
        <title>Plastid movement impaired 2, a new gene involved in normal blue-light-induced chloroplast movements in Arabidopsis.</title>
        <authorList>
            <person name="Luesse D.R."/>
            <person name="Deblasio S.L."/>
            <person name="Hangarter R.P."/>
        </authorList>
    </citation>
    <scope>FUNCTION</scope>
    <scope>TISSUE SPECIFICITY</scope>
</reference>
<reference key="4">
    <citation type="journal article" date="2010" name="Proc. Natl. Acad. Sci. U.S.A.">
        <title>Two interacting coiled-coil proteins, WEB1 and PMI2, maintain the chloroplast photorelocation movement velocity in Arabidopsis.</title>
        <authorList>
            <person name="Kodama Y."/>
            <person name="Suetsugu N."/>
            <person name="Kong S.G."/>
            <person name="Wada M."/>
        </authorList>
    </citation>
    <scope>FUNCTION</scope>
    <scope>DISRUPTION PHENOTYPE</scope>
    <scope>TISSUE SPECIFICITY</scope>
    <scope>SUBCELLULAR LOCATION</scope>
    <scope>GENE FAMILY</scope>
    <scope>INTERACTION WITH WEB1</scope>
</reference>
<evidence type="ECO:0000255" key="1"/>
<evidence type="ECO:0000269" key="2">
    <source>
    </source>
</evidence>
<evidence type="ECO:0000269" key="3">
    <source>
    </source>
</evidence>
<evidence type="ECO:0000305" key="4"/>
<keyword id="KW-0175">Coiled coil</keyword>
<keyword id="KW-0963">Cytoplasm</keyword>
<keyword id="KW-1185">Reference proteome</keyword>
<comment type="function">
    <text evidence="2 3">Required for the chloroplast avoidance response under high intensity blue light. This avoidance response consists in the relocation of chloroplasts on the anticlinal side of exposed cells. Acts in association with WEB1 to maintain the velocity of chloroplast photorelocation movement via cp-actin filaments regulation.</text>
</comment>
<comment type="subunit">
    <text evidence="3">Interacts with WEB1.</text>
</comment>
<comment type="interaction">
    <interactant intactId="EBI-4408425">
        <id>Q9C9N6</id>
    </interactant>
    <interactant intactId="EBI-4408440">
        <id>O48724</id>
        <label>WEB1</label>
    </interactant>
    <organismsDiffer>false</organismsDiffer>
    <experiments>6</experiments>
</comment>
<comment type="subcellular location">
    <subcellularLocation>
        <location evidence="3">Cytoplasm</location>
    </subcellularLocation>
</comment>
<comment type="tissue specificity">
    <text evidence="2 3">Ubiquitous but preferentially in chloroplast-containing tissues.</text>
</comment>
<comment type="disruption phenotype">
    <text evidence="3">Deficient chloroplast response.</text>
</comment>
<comment type="similarity">
    <text evidence="4">Belongs to the WEB family.</text>
</comment>
<organism>
    <name type="scientific">Arabidopsis thaliana</name>
    <name type="common">Mouse-ear cress</name>
    <dbReference type="NCBI Taxonomy" id="3702"/>
    <lineage>
        <taxon>Eukaryota</taxon>
        <taxon>Viridiplantae</taxon>
        <taxon>Streptophyta</taxon>
        <taxon>Embryophyta</taxon>
        <taxon>Tracheophyta</taxon>
        <taxon>Spermatophyta</taxon>
        <taxon>Magnoliopsida</taxon>
        <taxon>eudicotyledons</taxon>
        <taxon>Gunneridae</taxon>
        <taxon>Pentapetalae</taxon>
        <taxon>rosids</taxon>
        <taxon>malvids</taxon>
        <taxon>Brassicales</taxon>
        <taxon>Brassicaceae</taxon>
        <taxon>Camelineae</taxon>
        <taxon>Arabidopsis</taxon>
    </lineage>
</organism>
<gene>
    <name type="primary">PMI2</name>
    <name type="synonym">WEB2</name>
    <name type="ordered locus">At1g66840</name>
    <name type="ORF">F4N21.22</name>
</gene>
<dbReference type="EMBL" id="AC013288">
    <property type="protein sequence ID" value="AAG60086.1"/>
    <property type="molecule type" value="Genomic_DNA"/>
</dbReference>
<dbReference type="EMBL" id="CP002684">
    <property type="protein sequence ID" value="AEE34561.1"/>
    <property type="molecule type" value="Genomic_DNA"/>
</dbReference>
<dbReference type="EMBL" id="CP002684">
    <property type="protein sequence ID" value="ANM57978.1"/>
    <property type="molecule type" value="Genomic_DNA"/>
</dbReference>
<dbReference type="RefSeq" id="NP_001320449.1">
    <property type="nucleotide sequence ID" value="NM_001334250.1"/>
</dbReference>
<dbReference type="RefSeq" id="NP_176856.1">
    <property type="nucleotide sequence ID" value="NM_105355.3"/>
</dbReference>
<dbReference type="SMR" id="Q9C9N6"/>
<dbReference type="FunCoup" id="Q9C9N6">
    <property type="interactions" value="516"/>
</dbReference>
<dbReference type="IntAct" id="Q9C9N6">
    <property type="interactions" value="1"/>
</dbReference>
<dbReference type="STRING" id="3702.Q9C9N6"/>
<dbReference type="iPTMnet" id="Q9C9N6"/>
<dbReference type="PaxDb" id="3702-AT1G66840.1"/>
<dbReference type="ProteomicsDB" id="234738"/>
<dbReference type="EnsemblPlants" id="AT1G66840.1">
    <property type="protein sequence ID" value="AT1G66840.1"/>
    <property type="gene ID" value="AT1G66840"/>
</dbReference>
<dbReference type="EnsemblPlants" id="AT1G66840.2">
    <property type="protein sequence ID" value="AT1G66840.2"/>
    <property type="gene ID" value="AT1G66840"/>
</dbReference>
<dbReference type="GeneID" id="843002"/>
<dbReference type="Gramene" id="AT1G66840.1">
    <property type="protein sequence ID" value="AT1G66840.1"/>
    <property type="gene ID" value="AT1G66840"/>
</dbReference>
<dbReference type="Gramene" id="AT1G66840.2">
    <property type="protein sequence ID" value="AT1G66840.2"/>
    <property type="gene ID" value="AT1G66840"/>
</dbReference>
<dbReference type="KEGG" id="ath:AT1G66840"/>
<dbReference type="Araport" id="AT1G66840"/>
<dbReference type="TAIR" id="AT1G66840">
    <property type="gene designation" value="PMI2"/>
</dbReference>
<dbReference type="eggNOG" id="ENOG502QR0X">
    <property type="taxonomic scope" value="Eukaryota"/>
</dbReference>
<dbReference type="HOGENOM" id="CLU_017212_1_1_1"/>
<dbReference type="InParanoid" id="Q9C9N6"/>
<dbReference type="OMA" id="KRCVIAE"/>
<dbReference type="PhylomeDB" id="Q9C9N6"/>
<dbReference type="PRO" id="PR:Q9C9N6"/>
<dbReference type="Proteomes" id="UP000006548">
    <property type="component" value="Chromosome 1"/>
</dbReference>
<dbReference type="ExpressionAtlas" id="Q9C9N6">
    <property type="expression patterns" value="baseline and differential"/>
</dbReference>
<dbReference type="GO" id="GO:0005829">
    <property type="term" value="C:cytosol"/>
    <property type="evidence" value="ECO:0000314"/>
    <property type="project" value="TAIR"/>
</dbReference>
<dbReference type="GO" id="GO:0009904">
    <property type="term" value="P:chloroplast accumulation movement"/>
    <property type="evidence" value="ECO:0000315"/>
    <property type="project" value="TAIR"/>
</dbReference>
<dbReference type="GO" id="GO:0009903">
    <property type="term" value="P:chloroplast avoidance movement"/>
    <property type="evidence" value="ECO:0000315"/>
    <property type="project" value="TAIR"/>
</dbReference>
<dbReference type="GO" id="GO:0009637">
    <property type="term" value="P:response to blue light"/>
    <property type="evidence" value="ECO:0000315"/>
    <property type="project" value="TAIR"/>
</dbReference>
<dbReference type="InterPro" id="IPR008545">
    <property type="entry name" value="Web"/>
</dbReference>
<dbReference type="PANTHER" id="PTHR32054">
    <property type="entry name" value="HEAVY CHAIN, PUTATIVE, EXPRESSED-RELATED-RELATED"/>
    <property type="match status" value="1"/>
</dbReference>
<dbReference type="PANTHER" id="PTHR32054:SF2">
    <property type="entry name" value="PROTEIN PLASTID MOVEMENT IMPAIRED 2"/>
    <property type="match status" value="1"/>
</dbReference>
<dbReference type="Pfam" id="PF05701">
    <property type="entry name" value="WEMBL"/>
    <property type="match status" value="1"/>
</dbReference>
<name>PMI2_ARATH</name>
<accession>Q9C9N6</accession>
<proteinExistence type="evidence at protein level"/>
<protein>
    <recommendedName>
        <fullName>Protein PLASTID MOVEMENT IMPAIRED 2</fullName>
    </recommendedName>
    <alternativeName>
        <fullName>Protein WEAK CHLOROPLAST MOVEMENT UNDER BLUE LIGHT 2</fullName>
        <shortName>Protein WEB2</shortName>
    </alternativeName>
</protein>
<feature type="chain" id="PRO_0000283627" description="Protein PLASTID MOVEMENT IMPAIRED 2">
    <location>
        <begin position="1"/>
        <end position="607"/>
    </location>
</feature>
<feature type="coiled-coil region" evidence="1">
    <location>
        <begin position="66"/>
        <end position="295"/>
    </location>
</feature>
<feature type="coiled-coil region" evidence="1">
    <location>
        <begin position="329"/>
        <end position="445"/>
    </location>
</feature>
<sequence>MGERNLDGTVSVKATINKYGQKATRSVIKSSVAEDLHKSGRELGIYRESRRVAESAKAKAEVELCKAKKIVKELTLRIEESNRRLKSRRIDIEAVMNESRIDGNGGYVRIMRELEDMKQELSKLKLDVVYVSREKVVAEKEVMELESRMEENLKLLESLKLEVDVANEEHVLVEVAKIEALKECKEVEEQREKERKEVSESLHKRKKRIREMIREIERSKNFENELAETLLDIEMLETQLKLVKEMERKVQRNESMSRSKNRAFERGKDNLSVLKEVTEATEAKKAELASINAELFCLVNTMDTLRKEFDHAKKETAWLDKMIQKDDVMLERLNTKLLIAKDQLEAVSKAEERISYLADNLTTSFEKLKSDREAAKKEELKLREEARIINNEIQKTETGFDGKEKELLSKLDELEKAKHAESLALEKLETMVEKTMETREMESRRNSTITISRFEYEYLSGKACHAEETAEKKVEAAMAWVEALKASTKAIMIKTESLKRVSGKTMLEEERESFRMQRSLSIKRLVQDEIQKFKGNSEDNGLINSPKPVRKSVRLSGKFAPVQGGKSRRYSSGNRATPTFFVIKKKKKVPNMVKFFSRKRRNSSLEQ</sequence>